<keyword id="KW-0413">Isomerase</keyword>
<keyword id="KW-1185">Reference proteome</keyword>
<keyword id="KW-0819">tRNA processing</keyword>
<dbReference type="EC" id="5.4.99.25" evidence="1"/>
<dbReference type="EMBL" id="CP000020">
    <property type="protein sequence ID" value="AAW84983.1"/>
    <property type="molecule type" value="Genomic_DNA"/>
</dbReference>
<dbReference type="RefSeq" id="WP_011261260.1">
    <property type="nucleotide sequence ID" value="NC_006840.2"/>
</dbReference>
<dbReference type="RefSeq" id="YP_203871.1">
    <property type="nucleotide sequence ID" value="NC_006840.2"/>
</dbReference>
<dbReference type="SMR" id="Q5E7L3"/>
<dbReference type="STRING" id="312309.VF_0488"/>
<dbReference type="EnsemblBacteria" id="AAW84983">
    <property type="protein sequence ID" value="AAW84983"/>
    <property type="gene ID" value="VF_0488"/>
</dbReference>
<dbReference type="GeneID" id="54163125"/>
<dbReference type="KEGG" id="vfi:VF_0488"/>
<dbReference type="PATRIC" id="fig|312309.11.peg.478"/>
<dbReference type="eggNOG" id="COG0130">
    <property type="taxonomic scope" value="Bacteria"/>
</dbReference>
<dbReference type="HOGENOM" id="CLU_032087_0_3_6"/>
<dbReference type="OrthoDB" id="9802309at2"/>
<dbReference type="Proteomes" id="UP000000537">
    <property type="component" value="Chromosome I"/>
</dbReference>
<dbReference type="GO" id="GO:0003723">
    <property type="term" value="F:RNA binding"/>
    <property type="evidence" value="ECO:0007669"/>
    <property type="project" value="InterPro"/>
</dbReference>
<dbReference type="GO" id="GO:0160148">
    <property type="term" value="F:tRNA pseudouridine(55) synthase activity"/>
    <property type="evidence" value="ECO:0007669"/>
    <property type="project" value="UniProtKB-EC"/>
</dbReference>
<dbReference type="GO" id="GO:1990481">
    <property type="term" value="P:mRNA pseudouridine synthesis"/>
    <property type="evidence" value="ECO:0007669"/>
    <property type="project" value="TreeGrafter"/>
</dbReference>
<dbReference type="GO" id="GO:0031119">
    <property type="term" value="P:tRNA pseudouridine synthesis"/>
    <property type="evidence" value="ECO:0007669"/>
    <property type="project" value="UniProtKB-UniRule"/>
</dbReference>
<dbReference type="CDD" id="cd02573">
    <property type="entry name" value="PseudoU_synth_EcTruB"/>
    <property type="match status" value="1"/>
</dbReference>
<dbReference type="CDD" id="cd21152">
    <property type="entry name" value="PUA_TruB_bacterial"/>
    <property type="match status" value="1"/>
</dbReference>
<dbReference type="FunFam" id="2.30.130.10:FF:000004">
    <property type="entry name" value="tRNA pseudouridine synthase B"/>
    <property type="match status" value="1"/>
</dbReference>
<dbReference type="FunFam" id="3.30.2350.10:FF:000003">
    <property type="entry name" value="tRNA pseudouridine synthase B"/>
    <property type="match status" value="1"/>
</dbReference>
<dbReference type="Gene3D" id="3.30.2350.10">
    <property type="entry name" value="Pseudouridine synthase"/>
    <property type="match status" value="1"/>
</dbReference>
<dbReference type="Gene3D" id="2.30.130.10">
    <property type="entry name" value="PUA domain"/>
    <property type="match status" value="1"/>
</dbReference>
<dbReference type="HAMAP" id="MF_01080">
    <property type="entry name" value="TruB_bact"/>
    <property type="match status" value="1"/>
</dbReference>
<dbReference type="InterPro" id="IPR020103">
    <property type="entry name" value="PsdUridine_synth_cat_dom_sf"/>
</dbReference>
<dbReference type="InterPro" id="IPR002501">
    <property type="entry name" value="PsdUridine_synth_N"/>
</dbReference>
<dbReference type="InterPro" id="IPR015947">
    <property type="entry name" value="PUA-like_sf"/>
</dbReference>
<dbReference type="InterPro" id="IPR036974">
    <property type="entry name" value="PUA_sf"/>
</dbReference>
<dbReference type="InterPro" id="IPR014780">
    <property type="entry name" value="tRNA_psdUridine_synth_TruB"/>
</dbReference>
<dbReference type="InterPro" id="IPR015240">
    <property type="entry name" value="tRNA_sdUridine_synth_fam1_C"/>
</dbReference>
<dbReference type="InterPro" id="IPR032819">
    <property type="entry name" value="TruB_C"/>
</dbReference>
<dbReference type="NCBIfam" id="TIGR00431">
    <property type="entry name" value="TruB"/>
    <property type="match status" value="1"/>
</dbReference>
<dbReference type="PANTHER" id="PTHR13767:SF2">
    <property type="entry name" value="PSEUDOURIDYLATE SYNTHASE TRUB1"/>
    <property type="match status" value="1"/>
</dbReference>
<dbReference type="PANTHER" id="PTHR13767">
    <property type="entry name" value="TRNA-PSEUDOURIDINE SYNTHASE"/>
    <property type="match status" value="1"/>
</dbReference>
<dbReference type="Pfam" id="PF09157">
    <property type="entry name" value="TruB-C_2"/>
    <property type="match status" value="1"/>
</dbReference>
<dbReference type="Pfam" id="PF16198">
    <property type="entry name" value="TruB_C_2"/>
    <property type="match status" value="1"/>
</dbReference>
<dbReference type="Pfam" id="PF01509">
    <property type="entry name" value="TruB_N"/>
    <property type="match status" value="1"/>
</dbReference>
<dbReference type="SUPFAM" id="SSF55120">
    <property type="entry name" value="Pseudouridine synthase"/>
    <property type="match status" value="1"/>
</dbReference>
<dbReference type="SUPFAM" id="SSF88697">
    <property type="entry name" value="PUA domain-like"/>
    <property type="match status" value="1"/>
</dbReference>
<sequence length="316" mass="35591">MARRRKGRPVNGVILIDKPTGITSNDTLQKVKRIYFAEKAGHTGALDPLATGMLPICLGEATKFSQFLLDSDKRYRVVAKLGERTNTSDSDGEVVQTREVKVDRGQLERCIAKFRGTTDQIPSMFSALKYQGRPLYEYAREGIEVPRESRKITVYSIELLRFEGHEVEMEVHCSKALTFVRLPTILGEMLGCGAHVTYLRRTGVSNYPYENMVTIEDLEALLEQAHREERAPRELLDPLLMPMDSAVQDLPEVNMIPELADHVLHGQPVQVFGAPQDGIVRMTSGDERLFIGVGHIDDDGRVAPKRLVVFRDEEEK</sequence>
<organism>
    <name type="scientific">Aliivibrio fischeri (strain ATCC 700601 / ES114)</name>
    <name type="common">Vibrio fischeri</name>
    <dbReference type="NCBI Taxonomy" id="312309"/>
    <lineage>
        <taxon>Bacteria</taxon>
        <taxon>Pseudomonadati</taxon>
        <taxon>Pseudomonadota</taxon>
        <taxon>Gammaproteobacteria</taxon>
        <taxon>Vibrionales</taxon>
        <taxon>Vibrionaceae</taxon>
        <taxon>Aliivibrio</taxon>
    </lineage>
</organism>
<accession>Q5E7L3</accession>
<protein>
    <recommendedName>
        <fullName evidence="1">tRNA pseudouridine synthase B</fullName>
        <ecNumber evidence="1">5.4.99.25</ecNumber>
    </recommendedName>
    <alternativeName>
        <fullName evidence="1">tRNA pseudouridine(55) synthase</fullName>
        <shortName evidence="1">Psi55 synthase</shortName>
    </alternativeName>
    <alternativeName>
        <fullName evidence="1">tRNA pseudouridylate synthase</fullName>
    </alternativeName>
    <alternativeName>
        <fullName evidence="1">tRNA-uridine isomerase</fullName>
    </alternativeName>
</protein>
<feature type="chain" id="PRO_0000121939" description="tRNA pseudouridine synthase B">
    <location>
        <begin position="1"/>
        <end position="316"/>
    </location>
</feature>
<feature type="active site" description="Nucleophile" evidence="1">
    <location>
        <position position="47"/>
    </location>
</feature>
<reference key="1">
    <citation type="journal article" date="2005" name="Proc. Natl. Acad. Sci. U.S.A.">
        <title>Complete genome sequence of Vibrio fischeri: a symbiotic bacterium with pathogenic congeners.</title>
        <authorList>
            <person name="Ruby E.G."/>
            <person name="Urbanowski M."/>
            <person name="Campbell J."/>
            <person name="Dunn A."/>
            <person name="Faini M."/>
            <person name="Gunsalus R."/>
            <person name="Lostroh P."/>
            <person name="Lupp C."/>
            <person name="McCann J."/>
            <person name="Millikan D."/>
            <person name="Schaefer A."/>
            <person name="Stabb E."/>
            <person name="Stevens A."/>
            <person name="Visick K."/>
            <person name="Whistler C."/>
            <person name="Greenberg E.P."/>
        </authorList>
    </citation>
    <scope>NUCLEOTIDE SEQUENCE [LARGE SCALE GENOMIC DNA]</scope>
    <source>
        <strain>ATCC 700601 / ES114</strain>
    </source>
</reference>
<name>TRUB_ALIF1</name>
<evidence type="ECO:0000255" key="1">
    <source>
        <dbReference type="HAMAP-Rule" id="MF_01080"/>
    </source>
</evidence>
<gene>
    <name evidence="1" type="primary">truB</name>
    <name type="ordered locus">VF_0488</name>
</gene>
<proteinExistence type="inferred from homology"/>
<comment type="function">
    <text evidence="1">Responsible for synthesis of pseudouridine from uracil-55 in the psi GC loop of transfer RNAs.</text>
</comment>
<comment type="catalytic activity">
    <reaction evidence="1">
        <text>uridine(55) in tRNA = pseudouridine(55) in tRNA</text>
        <dbReference type="Rhea" id="RHEA:42532"/>
        <dbReference type="Rhea" id="RHEA-COMP:10101"/>
        <dbReference type="Rhea" id="RHEA-COMP:10102"/>
        <dbReference type="ChEBI" id="CHEBI:65314"/>
        <dbReference type="ChEBI" id="CHEBI:65315"/>
        <dbReference type="EC" id="5.4.99.25"/>
    </reaction>
</comment>
<comment type="similarity">
    <text evidence="1">Belongs to the pseudouridine synthase TruB family. Type 1 subfamily.</text>
</comment>